<organism>
    <name type="scientific">Pseudomonas aeruginosa (strain LESB58)</name>
    <dbReference type="NCBI Taxonomy" id="557722"/>
    <lineage>
        <taxon>Bacteria</taxon>
        <taxon>Pseudomonadati</taxon>
        <taxon>Pseudomonadota</taxon>
        <taxon>Gammaproteobacteria</taxon>
        <taxon>Pseudomonadales</taxon>
        <taxon>Pseudomonadaceae</taxon>
        <taxon>Pseudomonas</taxon>
    </lineage>
</organism>
<proteinExistence type="inferred from homology"/>
<evidence type="ECO:0000255" key="1">
    <source>
        <dbReference type="HAMAP-Rule" id="MF_01428"/>
    </source>
</evidence>
<name>GLUQ_PSEA8</name>
<gene>
    <name evidence="1" type="primary">gluQ</name>
    <name type="ordered locus">PLES_51091</name>
</gene>
<protein>
    <recommendedName>
        <fullName evidence="1">Glutamyl-Q tRNA(Asp) synthetase</fullName>
        <shortName evidence="1">Glu-Q-RSs</shortName>
        <ecNumber evidence="1">6.1.1.-</ecNumber>
    </recommendedName>
</protein>
<comment type="function">
    <text evidence="1">Catalyzes the tRNA-independent activation of glutamate in presence of ATP and the subsequent transfer of glutamate onto a tRNA(Asp). Glutamate is transferred on the 2-amino-5-(4,5-dihydroxy-2-cyclopenten-1-yl) moiety of the queuosine in the wobble position of the QUC anticodon.</text>
</comment>
<comment type="cofactor">
    <cofactor evidence="1">
        <name>Zn(2+)</name>
        <dbReference type="ChEBI" id="CHEBI:29105"/>
    </cofactor>
    <text evidence="1">Binds 1 zinc ion per subunit.</text>
</comment>
<comment type="similarity">
    <text evidence="1">Belongs to the class-I aminoacyl-tRNA synthetase family. GluQ subfamily.</text>
</comment>
<reference key="1">
    <citation type="journal article" date="2009" name="Genome Res.">
        <title>Newly introduced genomic prophage islands are critical determinants of in vivo competitiveness in the Liverpool epidemic strain of Pseudomonas aeruginosa.</title>
        <authorList>
            <person name="Winstanley C."/>
            <person name="Langille M.G.I."/>
            <person name="Fothergill J.L."/>
            <person name="Kukavica-Ibrulj I."/>
            <person name="Paradis-Bleau C."/>
            <person name="Sanschagrin F."/>
            <person name="Thomson N.R."/>
            <person name="Winsor G.L."/>
            <person name="Quail M.A."/>
            <person name="Lennard N."/>
            <person name="Bignell A."/>
            <person name="Clarke L."/>
            <person name="Seeger K."/>
            <person name="Saunders D."/>
            <person name="Harris D."/>
            <person name="Parkhill J."/>
            <person name="Hancock R.E.W."/>
            <person name="Brinkman F.S.L."/>
            <person name="Levesque R.C."/>
        </authorList>
    </citation>
    <scope>NUCLEOTIDE SEQUENCE [LARGE SCALE GENOMIC DNA]</scope>
    <source>
        <strain>LESB58</strain>
    </source>
</reference>
<sequence length="293" mass="32541">MTSSYVGRFAPTPSGYLHFGSLVAAVASYLDARAVGGRWLVRMEDLDPPREVPGAQQAILETLERYGFEWDGAVERQSERFPAYAAVVEQLLRSGLAYACTCSRKQLEGFAGIYPGFCRDAGHAREDAAIRLRVPELEYRFVDRVQGEVRQHLGREVGDFVIQRRDGFYAYQLAVVLDDAWQGITDIVRGADLLDSTPRQLYLQELLGLSQPRYLHVPLIVQPDGHKLGKSYRSPPLPAEQAAAPLTRALRALGQRPPAELAQASASEALAWGVAHWDATRIPRCATLPEERL</sequence>
<keyword id="KW-0030">Aminoacyl-tRNA synthetase</keyword>
<keyword id="KW-0067">ATP-binding</keyword>
<keyword id="KW-0436">Ligase</keyword>
<keyword id="KW-0479">Metal-binding</keyword>
<keyword id="KW-0547">Nucleotide-binding</keyword>
<keyword id="KW-0862">Zinc</keyword>
<dbReference type="EC" id="6.1.1.-" evidence="1"/>
<dbReference type="EMBL" id="FM209186">
    <property type="protein sequence ID" value="CAW29863.1"/>
    <property type="molecule type" value="Genomic_DNA"/>
</dbReference>
<dbReference type="SMR" id="B7V1D6"/>
<dbReference type="KEGG" id="pag:PLES_51091"/>
<dbReference type="HOGENOM" id="CLU_015768_0_1_6"/>
<dbReference type="GO" id="GO:0005829">
    <property type="term" value="C:cytosol"/>
    <property type="evidence" value="ECO:0007669"/>
    <property type="project" value="TreeGrafter"/>
</dbReference>
<dbReference type="GO" id="GO:0005524">
    <property type="term" value="F:ATP binding"/>
    <property type="evidence" value="ECO:0007669"/>
    <property type="project" value="UniProtKB-KW"/>
</dbReference>
<dbReference type="GO" id="GO:0004818">
    <property type="term" value="F:glutamate-tRNA ligase activity"/>
    <property type="evidence" value="ECO:0007669"/>
    <property type="project" value="TreeGrafter"/>
</dbReference>
<dbReference type="GO" id="GO:0008270">
    <property type="term" value="F:zinc ion binding"/>
    <property type="evidence" value="ECO:0007669"/>
    <property type="project" value="UniProtKB-UniRule"/>
</dbReference>
<dbReference type="GO" id="GO:0006424">
    <property type="term" value="P:glutamyl-tRNA aminoacylation"/>
    <property type="evidence" value="ECO:0007669"/>
    <property type="project" value="InterPro"/>
</dbReference>
<dbReference type="GO" id="GO:0006400">
    <property type="term" value="P:tRNA modification"/>
    <property type="evidence" value="ECO:0007669"/>
    <property type="project" value="InterPro"/>
</dbReference>
<dbReference type="FunFam" id="3.40.50.620:FF:000093">
    <property type="entry name" value="Glutamyl-Q tRNA(Asp) synthetase"/>
    <property type="match status" value="1"/>
</dbReference>
<dbReference type="Gene3D" id="3.40.50.620">
    <property type="entry name" value="HUPs"/>
    <property type="match status" value="1"/>
</dbReference>
<dbReference type="HAMAP" id="MF_01428">
    <property type="entry name" value="Glu_Q_tRNA_synth"/>
    <property type="match status" value="1"/>
</dbReference>
<dbReference type="InterPro" id="IPR022380">
    <property type="entry name" value="Glu-Q_tRNA(Asp)_Synthase"/>
</dbReference>
<dbReference type="InterPro" id="IPR000924">
    <property type="entry name" value="Glu/Gln-tRNA-synth"/>
</dbReference>
<dbReference type="InterPro" id="IPR020058">
    <property type="entry name" value="Glu/Gln-tRNA-synth_Ib_cat-dom"/>
</dbReference>
<dbReference type="InterPro" id="IPR049940">
    <property type="entry name" value="GluQ/Sye"/>
</dbReference>
<dbReference type="InterPro" id="IPR014729">
    <property type="entry name" value="Rossmann-like_a/b/a_fold"/>
</dbReference>
<dbReference type="NCBIfam" id="NF004314">
    <property type="entry name" value="PRK05710.1-3"/>
    <property type="match status" value="1"/>
</dbReference>
<dbReference type="NCBIfam" id="TIGR03838">
    <property type="entry name" value="queuosine_YadB"/>
    <property type="match status" value="1"/>
</dbReference>
<dbReference type="PANTHER" id="PTHR43311">
    <property type="entry name" value="GLUTAMATE--TRNA LIGASE"/>
    <property type="match status" value="1"/>
</dbReference>
<dbReference type="PANTHER" id="PTHR43311:SF1">
    <property type="entry name" value="GLUTAMYL-Q TRNA(ASP) SYNTHETASE"/>
    <property type="match status" value="1"/>
</dbReference>
<dbReference type="Pfam" id="PF00749">
    <property type="entry name" value="tRNA-synt_1c"/>
    <property type="match status" value="2"/>
</dbReference>
<dbReference type="PRINTS" id="PR00987">
    <property type="entry name" value="TRNASYNTHGLU"/>
</dbReference>
<dbReference type="SUPFAM" id="SSF52374">
    <property type="entry name" value="Nucleotidylyl transferase"/>
    <property type="match status" value="1"/>
</dbReference>
<accession>B7V1D6</accession>
<feature type="chain" id="PRO_1000145744" description="Glutamyl-Q tRNA(Asp) synthetase">
    <location>
        <begin position="1"/>
        <end position="293"/>
    </location>
</feature>
<feature type="short sequence motif" description="'HIGH' region">
    <location>
        <begin position="11"/>
        <end position="21"/>
    </location>
</feature>
<feature type="short sequence motif" description="'KMSKS' region">
    <location>
        <begin position="227"/>
        <end position="231"/>
    </location>
</feature>
<feature type="binding site" evidence="1">
    <location>
        <begin position="8"/>
        <end position="12"/>
    </location>
    <ligand>
        <name>L-glutamate</name>
        <dbReference type="ChEBI" id="CHEBI:29985"/>
    </ligand>
</feature>
<feature type="binding site" evidence="1">
    <location>
        <position position="44"/>
    </location>
    <ligand>
        <name>L-glutamate</name>
        <dbReference type="ChEBI" id="CHEBI:29985"/>
    </ligand>
</feature>
<feature type="binding site" evidence="1">
    <location>
        <position position="100"/>
    </location>
    <ligand>
        <name>Zn(2+)</name>
        <dbReference type="ChEBI" id="CHEBI:29105"/>
    </ligand>
</feature>
<feature type="binding site" evidence="1">
    <location>
        <position position="102"/>
    </location>
    <ligand>
        <name>Zn(2+)</name>
        <dbReference type="ChEBI" id="CHEBI:29105"/>
    </ligand>
</feature>
<feature type="binding site" evidence="1">
    <location>
        <position position="114"/>
    </location>
    <ligand>
        <name>Zn(2+)</name>
        <dbReference type="ChEBI" id="CHEBI:29105"/>
    </ligand>
</feature>
<feature type="binding site" evidence="1">
    <location>
        <position position="118"/>
    </location>
    <ligand>
        <name>Zn(2+)</name>
        <dbReference type="ChEBI" id="CHEBI:29105"/>
    </ligand>
</feature>
<feature type="binding site" evidence="1">
    <location>
        <position position="171"/>
    </location>
    <ligand>
        <name>L-glutamate</name>
        <dbReference type="ChEBI" id="CHEBI:29985"/>
    </ligand>
</feature>
<feature type="binding site" evidence="1">
    <location>
        <position position="189"/>
    </location>
    <ligand>
        <name>L-glutamate</name>
        <dbReference type="ChEBI" id="CHEBI:29985"/>
    </ligand>
</feature>
<feature type="binding site" evidence="1">
    <location>
        <position position="230"/>
    </location>
    <ligand>
        <name>ATP</name>
        <dbReference type="ChEBI" id="CHEBI:30616"/>
    </ligand>
</feature>